<organism>
    <name type="scientific">Bos taurus</name>
    <name type="common">Bovine</name>
    <dbReference type="NCBI Taxonomy" id="9913"/>
    <lineage>
        <taxon>Eukaryota</taxon>
        <taxon>Metazoa</taxon>
        <taxon>Chordata</taxon>
        <taxon>Craniata</taxon>
        <taxon>Vertebrata</taxon>
        <taxon>Euteleostomi</taxon>
        <taxon>Mammalia</taxon>
        <taxon>Eutheria</taxon>
        <taxon>Laurasiatheria</taxon>
        <taxon>Artiodactyla</taxon>
        <taxon>Ruminantia</taxon>
        <taxon>Pecora</taxon>
        <taxon>Bovidae</taxon>
        <taxon>Bovinae</taxon>
        <taxon>Bos</taxon>
    </lineage>
</organism>
<comment type="function">
    <text>Placental prolactin-related proteins may play a specific role during gestation.</text>
</comment>
<comment type="subcellular location">
    <subcellularLocation>
        <location>Secreted</location>
    </subcellularLocation>
</comment>
<comment type="similarity">
    <text evidence="4">Belongs to the somatotropin/prolactin family.</text>
</comment>
<proteinExistence type="evidence at transcript level"/>
<sequence length="239" mass="27876">MAPAPSFHGHQWTYNLVRGSCLLLLLVMSNLLLCQGILCPSLCPDGDDVCRASLIDLFVHASVLSTGMYNTSVKMFTDFDEQYAQGKEYFINVSDKCHTNSLHLPEDMQHNPTDEQKGLIMWILMLLYSWQRPLYQLVTDLRSMKEVSNTILSSARENVKKLKELQALIERPFSQVIFTARRKMYIARIYWFGLRSLLSSNEDRRHSAFYSLFFCLRRDTRKLDIYTKFVACRLIYKKC</sequence>
<accession>P18917</accession>
<protein>
    <recommendedName>
        <fullName>Placental prolactin-related protein 4</fullName>
    </recommendedName>
    <alternativeName>
        <fullName>PLP-III</fullName>
    </alternativeName>
</protein>
<name>PLRP4_BOVIN</name>
<keyword id="KW-1015">Disulfide bond</keyword>
<keyword id="KW-0325">Glycoprotein</keyword>
<keyword id="KW-0372">Hormone</keyword>
<keyword id="KW-1185">Reference proteome</keyword>
<keyword id="KW-0964">Secreted</keyword>
<keyword id="KW-0732">Signal</keyword>
<gene>
    <name type="primary">PRP4</name>
</gene>
<feature type="signal peptide" evidence="3">
    <location>
        <begin position="1"/>
        <end position="36"/>
    </location>
</feature>
<feature type="chain" id="PRO_0000032952" description="Placental prolactin-related protein 4">
    <location>
        <begin position="37"/>
        <end position="239"/>
    </location>
</feature>
<feature type="glycosylation site" description="N-linked (GlcNAc...) asparagine" evidence="2">
    <location>
        <position position="70"/>
    </location>
</feature>
<feature type="glycosylation site" description="N-linked (GlcNAc...) asparagine" evidence="2">
    <location>
        <position position="92"/>
    </location>
</feature>
<feature type="disulfide bond" evidence="1">
    <location>
        <begin position="97"/>
        <end position="215"/>
    </location>
</feature>
<feature type="disulfide bond" evidence="1">
    <location>
        <begin position="232"/>
        <end position="239"/>
    </location>
</feature>
<evidence type="ECO:0000250" key="1"/>
<evidence type="ECO:0000250" key="2">
    <source>
        <dbReference type="UniProtKB" id="P05402"/>
    </source>
</evidence>
<evidence type="ECO:0000255" key="3"/>
<evidence type="ECO:0000305" key="4"/>
<reference key="1">
    <citation type="journal article" date="1989" name="Biochim. Biophys. Acta">
        <title>Isolation of a novel prolactin-like cDNA clone from bovine placenta: occurrence of new family members.</title>
        <authorList>
            <person name="Tanaka M."/>
            <person name="Yamakawa M."/>
            <person name="Watahiki M."/>
            <person name="Yamamoto M."/>
            <person name="Nakashima K."/>
        </authorList>
    </citation>
    <scope>NUCLEOTIDE SEQUENCE [MRNA]</scope>
    <source>
        <tissue>Placenta</tissue>
    </source>
</reference>
<dbReference type="EMBL" id="X15975">
    <property type="protein sequence ID" value="CAA34097.1"/>
    <property type="molecule type" value="mRNA"/>
</dbReference>
<dbReference type="PIR" id="S04966">
    <property type="entry name" value="S04966"/>
</dbReference>
<dbReference type="SMR" id="P18917"/>
<dbReference type="STRING" id="9913.ENSBTAP00000071385"/>
<dbReference type="GlyCosmos" id="P18917">
    <property type="glycosylation" value="2 sites, No reported glycans"/>
</dbReference>
<dbReference type="GlyGen" id="P18917">
    <property type="glycosylation" value="2 sites"/>
</dbReference>
<dbReference type="PaxDb" id="9913-ENSBTAP00000025208"/>
<dbReference type="eggNOG" id="ENOG502QYU3">
    <property type="taxonomic scope" value="Eukaryota"/>
</dbReference>
<dbReference type="InParanoid" id="P18917"/>
<dbReference type="Proteomes" id="UP000009136">
    <property type="component" value="Unplaced"/>
</dbReference>
<dbReference type="GO" id="GO:0005615">
    <property type="term" value="C:extracellular space"/>
    <property type="evidence" value="ECO:0000318"/>
    <property type="project" value="GO_Central"/>
</dbReference>
<dbReference type="GO" id="GO:0005179">
    <property type="term" value="F:hormone activity"/>
    <property type="evidence" value="ECO:0000318"/>
    <property type="project" value="GO_Central"/>
</dbReference>
<dbReference type="GO" id="GO:0005148">
    <property type="term" value="F:prolactin receptor binding"/>
    <property type="evidence" value="ECO:0000318"/>
    <property type="project" value="GO_Central"/>
</dbReference>
<dbReference type="GO" id="GO:0007166">
    <property type="term" value="P:cell surface receptor signaling pathway"/>
    <property type="evidence" value="ECO:0000318"/>
    <property type="project" value="GO_Central"/>
</dbReference>
<dbReference type="GO" id="GO:0007565">
    <property type="term" value="P:female pregnancy"/>
    <property type="evidence" value="ECO:0000318"/>
    <property type="project" value="GO_Central"/>
</dbReference>
<dbReference type="GO" id="GO:0030879">
    <property type="term" value="P:mammary gland development"/>
    <property type="evidence" value="ECO:0000318"/>
    <property type="project" value="GO_Central"/>
</dbReference>
<dbReference type="GO" id="GO:0009891">
    <property type="term" value="P:positive regulation of biosynthetic process"/>
    <property type="evidence" value="ECO:0007669"/>
    <property type="project" value="UniProtKB-ARBA"/>
</dbReference>
<dbReference type="GO" id="GO:1903489">
    <property type="term" value="P:positive regulation of lactation"/>
    <property type="evidence" value="ECO:0000318"/>
    <property type="project" value="GO_Central"/>
</dbReference>
<dbReference type="GO" id="GO:0046427">
    <property type="term" value="P:positive regulation of receptor signaling pathway via JAK-STAT"/>
    <property type="evidence" value="ECO:0000318"/>
    <property type="project" value="GO_Central"/>
</dbReference>
<dbReference type="GO" id="GO:0031667">
    <property type="term" value="P:response to nutrient levels"/>
    <property type="evidence" value="ECO:0000318"/>
    <property type="project" value="GO_Central"/>
</dbReference>
<dbReference type="CDD" id="cd10288">
    <property type="entry name" value="prolactin_like"/>
    <property type="match status" value="1"/>
</dbReference>
<dbReference type="Gene3D" id="1.20.1250.10">
    <property type="match status" value="1"/>
</dbReference>
<dbReference type="InterPro" id="IPR009079">
    <property type="entry name" value="4_helix_cytokine-like_core"/>
</dbReference>
<dbReference type="InterPro" id="IPR001400">
    <property type="entry name" value="Somatotropin/Prolactin"/>
</dbReference>
<dbReference type="InterPro" id="IPR018116">
    <property type="entry name" value="Somatotropin_CS"/>
</dbReference>
<dbReference type="PANTHER" id="PTHR11417:SF5">
    <property type="entry name" value="PROLACTIN"/>
    <property type="match status" value="1"/>
</dbReference>
<dbReference type="PANTHER" id="PTHR11417">
    <property type="entry name" value="SOMATOTROPIN,PROLACTIN"/>
    <property type="match status" value="1"/>
</dbReference>
<dbReference type="Pfam" id="PF00103">
    <property type="entry name" value="Hormone_1"/>
    <property type="match status" value="1"/>
</dbReference>
<dbReference type="PRINTS" id="PR00836">
    <property type="entry name" value="SOMATOTROPIN"/>
</dbReference>
<dbReference type="SUPFAM" id="SSF47266">
    <property type="entry name" value="4-helical cytokines"/>
    <property type="match status" value="1"/>
</dbReference>
<dbReference type="PROSITE" id="PS00338">
    <property type="entry name" value="SOMATOTROPIN_2"/>
    <property type="match status" value="1"/>
</dbReference>